<organism>
    <name type="scientific">Eremothecium gossypii (strain ATCC 10895 / CBS 109.51 / FGSC 9923 / NRRL Y-1056)</name>
    <name type="common">Yeast</name>
    <name type="synonym">Ashbya gossypii</name>
    <dbReference type="NCBI Taxonomy" id="284811"/>
    <lineage>
        <taxon>Eukaryota</taxon>
        <taxon>Fungi</taxon>
        <taxon>Dikarya</taxon>
        <taxon>Ascomycota</taxon>
        <taxon>Saccharomycotina</taxon>
        <taxon>Saccharomycetes</taxon>
        <taxon>Saccharomycetales</taxon>
        <taxon>Saccharomycetaceae</taxon>
        <taxon>Eremothecium</taxon>
    </lineage>
</organism>
<protein>
    <recommendedName>
        <fullName>Pre-mRNA-splicing factor CLF1</fullName>
    </recommendedName>
</protein>
<gene>
    <name type="primary">CLF1</name>
    <name type="ordered locus">AGL184W</name>
</gene>
<dbReference type="EMBL" id="AE016820">
    <property type="protein sequence ID" value="AAS54307.1"/>
    <property type="molecule type" value="Genomic_DNA"/>
</dbReference>
<dbReference type="RefSeq" id="NP_986483.1">
    <property type="nucleotide sequence ID" value="NM_211545.1"/>
</dbReference>
<dbReference type="SMR" id="Q750X3"/>
<dbReference type="FunCoup" id="Q750X3">
    <property type="interactions" value="1151"/>
</dbReference>
<dbReference type="STRING" id="284811.Q750X3"/>
<dbReference type="EnsemblFungi" id="AAS54307">
    <property type="protein sequence ID" value="AAS54307"/>
    <property type="gene ID" value="AGOS_AGL184W"/>
</dbReference>
<dbReference type="GeneID" id="4622776"/>
<dbReference type="KEGG" id="ago:AGOS_AGL184W"/>
<dbReference type="eggNOG" id="KOG1915">
    <property type="taxonomic scope" value="Eukaryota"/>
</dbReference>
<dbReference type="HOGENOM" id="CLU_011554_1_0_1"/>
<dbReference type="InParanoid" id="Q750X3"/>
<dbReference type="OMA" id="HIKVWIS"/>
<dbReference type="OrthoDB" id="541719at2759"/>
<dbReference type="Proteomes" id="UP000000591">
    <property type="component" value="Chromosome VII"/>
</dbReference>
<dbReference type="GO" id="GO:0000785">
    <property type="term" value="C:chromatin"/>
    <property type="evidence" value="ECO:0007669"/>
    <property type="project" value="EnsemblFungi"/>
</dbReference>
<dbReference type="GO" id="GO:0071014">
    <property type="term" value="C:post-mRNA release spliceosomal complex"/>
    <property type="evidence" value="ECO:0000318"/>
    <property type="project" value="GO_Central"/>
</dbReference>
<dbReference type="GO" id="GO:0000974">
    <property type="term" value="C:Prp19 complex"/>
    <property type="evidence" value="ECO:0000318"/>
    <property type="project" value="GO_Central"/>
</dbReference>
<dbReference type="GO" id="GO:0071006">
    <property type="term" value="C:U2-type catalytic step 1 spliceosome"/>
    <property type="evidence" value="ECO:0007669"/>
    <property type="project" value="EnsemblFungi"/>
</dbReference>
<dbReference type="GO" id="GO:0071007">
    <property type="term" value="C:U2-type catalytic step 2 spliceosome"/>
    <property type="evidence" value="ECO:0000318"/>
    <property type="project" value="GO_Central"/>
</dbReference>
<dbReference type="GO" id="GO:0071008">
    <property type="term" value="C:U2-type post-mRNA release spliceosomal complex"/>
    <property type="evidence" value="ECO:0007669"/>
    <property type="project" value="EnsemblFungi"/>
</dbReference>
<dbReference type="GO" id="GO:0071004">
    <property type="term" value="C:U2-type prespliceosome"/>
    <property type="evidence" value="ECO:0007669"/>
    <property type="project" value="EnsemblFungi"/>
</dbReference>
<dbReference type="GO" id="GO:0003682">
    <property type="term" value="F:chromatin binding"/>
    <property type="evidence" value="ECO:0007669"/>
    <property type="project" value="EnsemblFungi"/>
</dbReference>
<dbReference type="GO" id="GO:0003688">
    <property type="term" value="F:DNA replication origin binding"/>
    <property type="evidence" value="ECO:0007669"/>
    <property type="project" value="EnsemblFungi"/>
</dbReference>
<dbReference type="GO" id="GO:0000354">
    <property type="term" value="P:cis assembly of pre-catalytic spliceosome"/>
    <property type="evidence" value="ECO:0007669"/>
    <property type="project" value="EnsemblFungi"/>
</dbReference>
<dbReference type="GO" id="GO:0006270">
    <property type="term" value="P:DNA replication initiation"/>
    <property type="evidence" value="ECO:0007669"/>
    <property type="project" value="EnsemblFungi"/>
</dbReference>
<dbReference type="GO" id="GO:0000398">
    <property type="term" value="P:mRNA splicing, via spliceosome"/>
    <property type="evidence" value="ECO:0000318"/>
    <property type="project" value="GO_Central"/>
</dbReference>
<dbReference type="GO" id="GO:0000245">
    <property type="term" value="P:spliceosomal complex assembly"/>
    <property type="evidence" value="ECO:0000318"/>
    <property type="project" value="GO_Central"/>
</dbReference>
<dbReference type="FunFam" id="1.25.40.10:FF:001133">
    <property type="entry name" value="Crooked neck protein, putative"/>
    <property type="match status" value="1"/>
</dbReference>
<dbReference type="FunFam" id="1.25.40.10:FF:002542">
    <property type="entry name" value="Pre-mRNA-splicing factor CLF1"/>
    <property type="match status" value="1"/>
</dbReference>
<dbReference type="Gene3D" id="1.25.40.10">
    <property type="entry name" value="Tetratricopeptide repeat domain"/>
    <property type="match status" value="3"/>
</dbReference>
<dbReference type="InterPro" id="IPR003107">
    <property type="entry name" value="HAT"/>
</dbReference>
<dbReference type="InterPro" id="IPR055433">
    <property type="entry name" value="HAT_Syf1-like_N"/>
</dbReference>
<dbReference type="InterPro" id="IPR045075">
    <property type="entry name" value="Syf1-like"/>
</dbReference>
<dbReference type="InterPro" id="IPR011990">
    <property type="entry name" value="TPR-like_helical_dom_sf"/>
</dbReference>
<dbReference type="InterPro" id="IPR019734">
    <property type="entry name" value="TPR_rpt"/>
</dbReference>
<dbReference type="PANTHER" id="PTHR11246:SF3">
    <property type="entry name" value="CROOKED NECK-LIKE PROTEIN 1"/>
    <property type="match status" value="1"/>
</dbReference>
<dbReference type="PANTHER" id="PTHR11246">
    <property type="entry name" value="PRE-MRNA SPLICING FACTOR"/>
    <property type="match status" value="1"/>
</dbReference>
<dbReference type="Pfam" id="PF23233">
    <property type="entry name" value="HAT_Syf1_CNRKL1_N"/>
    <property type="match status" value="1"/>
</dbReference>
<dbReference type="SMART" id="SM00386">
    <property type="entry name" value="HAT"/>
    <property type="match status" value="12"/>
</dbReference>
<dbReference type="SUPFAM" id="SSF48452">
    <property type="entry name" value="TPR-like"/>
    <property type="match status" value="2"/>
</dbReference>
<sequence>MTEATKEDVTAAQLLTAPVGHDGARKGMDVDILDVEELRDWQRRKRSEFEEALKRNRLDVRQWLRYAAFEYEQRDMRRARSVFERALAVAPGDVVVWLRYVDCELRARDVNHARNLLVRATALLPRVDKLWYKYVLMEESLGQVELVRGVYTKWCTLEPAAAAWDAFVDFETRQGQVEHVREVYSRYVMVHPVAATWLKWVAFERKHGDAGTVRRVYSLACDTLTAFAGADVHEVEQLVVSFAEWEATQQELERSRAVLSVAVSRWPESSTLKDATAQLEKKFGGARAGESILFKRKREYEEQLLAHPLDYDAWWLYLDLLEESFPAELRAALAEATVKAVPRSQEKDMQWRKYVNLWLRYLLFLETVLVDSDLTRSMYQKLVREVIPNTKFTFAKAWIMYAEFEIRQEKLDKARKILGMSLGMCPKPKLFQYYIDLEIKLKEFDRVRRLHEKLLEFQPDVLSNWIEYAELEENLGDEDRARGIYEIGLTADGGLSQARQLQLMQRYIQFETDASEFERARALYSRYVALSGYDPNVWISCALYESSVPTAAQVASYAHDQPNSDGDDSDDAYEQEFELTEENKEQTRAIFEKALRHYTSEKDDEGRILVLQAYKDYESIHGSAEARQKIASRQPRKVTRKRTVDGIEKEYVAYEFPDDTVSTSSVASKFVSLAQRWKQQQAP</sequence>
<comment type="function">
    <text evidence="1">Involved in pre-mRNA splicing and cell cycle progression. Required for the spliceosome assembly and initiation of the DNA replication (By similarity).</text>
</comment>
<comment type="subunit">
    <text evidence="1">Associated with the spliceosome.</text>
</comment>
<comment type="subcellular location">
    <subcellularLocation>
        <location evidence="1">Nucleus</location>
    </subcellularLocation>
</comment>
<comment type="similarity">
    <text evidence="2">Belongs to the crooked-neck family.</text>
</comment>
<reference key="1">
    <citation type="journal article" date="2004" name="Science">
        <title>The Ashbya gossypii genome as a tool for mapping the ancient Saccharomyces cerevisiae genome.</title>
        <authorList>
            <person name="Dietrich F.S."/>
            <person name="Voegeli S."/>
            <person name="Brachat S."/>
            <person name="Lerch A."/>
            <person name="Gates K."/>
            <person name="Steiner S."/>
            <person name="Mohr C."/>
            <person name="Poehlmann R."/>
            <person name="Luedi P."/>
            <person name="Choi S."/>
            <person name="Wing R.A."/>
            <person name="Flavier A."/>
            <person name="Gaffney T.D."/>
            <person name="Philippsen P."/>
        </authorList>
    </citation>
    <scope>NUCLEOTIDE SEQUENCE [LARGE SCALE GENOMIC DNA]</scope>
    <source>
        <strain>ATCC 10895 / CBS 109.51 / FGSC 9923 / NRRL Y-1056</strain>
    </source>
</reference>
<reference key="2">
    <citation type="journal article" date="2013" name="G3 (Bethesda)">
        <title>Genomes of Ashbya fungi isolated from insects reveal four mating-type loci, numerous translocations, lack of transposons, and distinct gene duplications.</title>
        <authorList>
            <person name="Dietrich F.S."/>
            <person name="Voegeli S."/>
            <person name="Kuo S."/>
            <person name="Philippsen P."/>
        </authorList>
    </citation>
    <scope>GENOME REANNOTATION</scope>
    <source>
        <strain>ATCC 10895 / CBS 109.51 / FGSC 9923 / NRRL Y-1056</strain>
    </source>
</reference>
<name>CLF1_EREGS</name>
<accession>Q750X3</accession>
<proteinExistence type="inferred from homology"/>
<feature type="chain" id="PRO_0000205738" description="Pre-mRNA-splicing factor CLF1">
    <location>
        <begin position="1"/>
        <end position="683"/>
    </location>
</feature>
<feature type="repeat" description="HAT 1">
    <location>
        <begin position="40"/>
        <end position="72"/>
    </location>
</feature>
<feature type="repeat" description="HAT 2">
    <location>
        <begin position="74"/>
        <end position="106"/>
    </location>
</feature>
<feature type="repeat" description="HAT 3">
    <location>
        <begin position="108"/>
        <end position="140"/>
    </location>
</feature>
<feature type="repeat" description="HAT 4">
    <location>
        <begin position="142"/>
        <end position="173"/>
    </location>
</feature>
<feature type="repeat" description="HAT 5">
    <location>
        <begin position="175"/>
        <end position="206"/>
    </location>
</feature>
<feature type="repeat" description="HAT 6">
    <location>
        <begin position="291"/>
        <end position="323"/>
    </location>
</feature>
<feature type="repeat" description="HAT 7">
    <location>
        <begin position="336"/>
        <end position="367"/>
    </location>
</feature>
<feature type="repeat" description="HAT 8">
    <location>
        <begin position="374"/>
        <end position="407"/>
    </location>
</feature>
<feature type="repeat" description="HAT 9">
    <location>
        <begin position="409"/>
        <end position="440"/>
    </location>
</feature>
<feature type="repeat" description="HAT 10">
    <location>
        <begin position="442"/>
        <end position="474"/>
    </location>
</feature>
<feature type="repeat" description="HAT 11">
    <location>
        <begin position="476"/>
        <end position="513"/>
    </location>
</feature>
<feature type="repeat" description="HAT 12">
    <location>
        <begin position="515"/>
        <end position="547"/>
    </location>
</feature>
<feature type="repeat" description="HAT 13">
    <location>
        <begin position="582"/>
        <end position="620"/>
    </location>
</feature>
<keyword id="KW-0507">mRNA processing</keyword>
<keyword id="KW-0508">mRNA splicing</keyword>
<keyword id="KW-0539">Nucleus</keyword>
<keyword id="KW-1185">Reference proteome</keyword>
<keyword id="KW-0677">Repeat</keyword>
<keyword id="KW-0747">Spliceosome</keyword>
<evidence type="ECO:0000250" key="1"/>
<evidence type="ECO:0000305" key="2"/>